<proteinExistence type="inferred from homology"/>
<dbReference type="EC" id="2.1.1.177" evidence="1"/>
<dbReference type="EMBL" id="CP000383">
    <property type="protein sequence ID" value="ABG60037.1"/>
    <property type="molecule type" value="Genomic_DNA"/>
</dbReference>
<dbReference type="RefSeq" id="WP_011586147.1">
    <property type="nucleotide sequence ID" value="NC_008255.1"/>
</dbReference>
<dbReference type="SMR" id="Q11RC7"/>
<dbReference type="STRING" id="269798.CHU_2788"/>
<dbReference type="KEGG" id="chu:CHU_2788"/>
<dbReference type="eggNOG" id="COG1576">
    <property type="taxonomic scope" value="Bacteria"/>
</dbReference>
<dbReference type="HOGENOM" id="CLU_100552_2_0_10"/>
<dbReference type="OrthoDB" id="9806643at2"/>
<dbReference type="Proteomes" id="UP000001822">
    <property type="component" value="Chromosome"/>
</dbReference>
<dbReference type="GO" id="GO:0005737">
    <property type="term" value="C:cytoplasm"/>
    <property type="evidence" value="ECO:0007669"/>
    <property type="project" value="UniProtKB-SubCell"/>
</dbReference>
<dbReference type="GO" id="GO:0070038">
    <property type="term" value="F:rRNA (pseudouridine-N3-)-methyltransferase activity"/>
    <property type="evidence" value="ECO:0007669"/>
    <property type="project" value="UniProtKB-UniRule"/>
</dbReference>
<dbReference type="CDD" id="cd18081">
    <property type="entry name" value="RlmH-like"/>
    <property type="match status" value="1"/>
</dbReference>
<dbReference type="Gene3D" id="3.40.1280.10">
    <property type="match status" value="1"/>
</dbReference>
<dbReference type="HAMAP" id="MF_00658">
    <property type="entry name" value="23SrRNA_methyltr_H"/>
    <property type="match status" value="1"/>
</dbReference>
<dbReference type="InterPro" id="IPR029028">
    <property type="entry name" value="Alpha/beta_knot_MTases"/>
</dbReference>
<dbReference type="InterPro" id="IPR003742">
    <property type="entry name" value="RlmH-like"/>
</dbReference>
<dbReference type="InterPro" id="IPR029026">
    <property type="entry name" value="tRNA_m1G_MTases_N"/>
</dbReference>
<dbReference type="NCBIfam" id="NF000990">
    <property type="entry name" value="PRK00103.2-4"/>
    <property type="match status" value="1"/>
</dbReference>
<dbReference type="PANTHER" id="PTHR33603">
    <property type="entry name" value="METHYLTRANSFERASE"/>
    <property type="match status" value="1"/>
</dbReference>
<dbReference type="PANTHER" id="PTHR33603:SF1">
    <property type="entry name" value="RIBOSOMAL RNA LARGE SUBUNIT METHYLTRANSFERASE H"/>
    <property type="match status" value="1"/>
</dbReference>
<dbReference type="Pfam" id="PF02590">
    <property type="entry name" value="SPOUT_MTase"/>
    <property type="match status" value="1"/>
</dbReference>
<dbReference type="PIRSF" id="PIRSF004505">
    <property type="entry name" value="MT_bac"/>
    <property type="match status" value="1"/>
</dbReference>
<dbReference type="SUPFAM" id="SSF75217">
    <property type="entry name" value="alpha/beta knot"/>
    <property type="match status" value="1"/>
</dbReference>
<feature type="chain" id="PRO_0000260549" description="Ribosomal RNA large subunit methyltransferase H">
    <location>
        <begin position="1"/>
        <end position="155"/>
    </location>
</feature>
<feature type="binding site" evidence="1">
    <location>
        <position position="72"/>
    </location>
    <ligand>
        <name>S-adenosyl-L-methionine</name>
        <dbReference type="ChEBI" id="CHEBI:59789"/>
    </ligand>
</feature>
<feature type="binding site" evidence="1">
    <location>
        <position position="104"/>
    </location>
    <ligand>
        <name>S-adenosyl-L-methionine</name>
        <dbReference type="ChEBI" id="CHEBI:59789"/>
    </ligand>
</feature>
<feature type="binding site" evidence="1">
    <location>
        <begin position="123"/>
        <end position="128"/>
    </location>
    <ligand>
        <name>S-adenosyl-L-methionine</name>
        <dbReference type="ChEBI" id="CHEBI:59789"/>
    </ligand>
</feature>
<evidence type="ECO:0000255" key="1">
    <source>
        <dbReference type="HAMAP-Rule" id="MF_00658"/>
    </source>
</evidence>
<name>RLMH_CYTH3</name>
<sequence length="155" mass="17963">MKLQLWTIGKTNDAYLKEGCAQYTKRLPHYLPFEYLEIPEPKNTKLSSDVLKKEEEKLIFDRLQDSDQLILLDEKGNEFTSTEFGQYIQKKMNSVAGNLIFLIGGPYGFSDAVYKRANGKIALSKMTFSHQMVRLFALEQLYRACTIIKGEKYHH</sequence>
<protein>
    <recommendedName>
        <fullName evidence="1">Ribosomal RNA large subunit methyltransferase H</fullName>
        <ecNumber evidence="1">2.1.1.177</ecNumber>
    </recommendedName>
    <alternativeName>
        <fullName evidence="1">23S rRNA (pseudouridine1915-N3)-methyltransferase</fullName>
    </alternativeName>
    <alternativeName>
        <fullName evidence="1">23S rRNA m3Psi1915 methyltransferase</fullName>
    </alternativeName>
    <alternativeName>
        <fullName evidence="1">rRNA (pseudouridine-N3-)-methyltransferase RlmH</fullName>
    </alternativeName>
</protein>
<comment type="function">
    <text evidence="1">Specifically methylates the pseudouridine at position 1915 (m3Psi1915) in 23S rRNA.</text>
</comment>
<comment type="catalytic activity">
    <reaction evidence="1">
        <text>pseudouridine(1915) in 23S rRNA + S-adenosyl-L-methionine = N(3)-methylpseudouridine(1915) in 23S rRNA + S-adenosyl-L-homocysteine + H(+)</text>
        <dbReference type="Rhea" id="RHEA:42752"/>
        <dbReference type="Rhea" id="RHEA-COMP:10221"/>
        <dbReference type="Rhea" id="RHEA-COMP:10222"/>
        <dbReference type="ChEBI" id="CHEBI:15378"/>
        <dbReference type="ChEBI" id="CHEBI:57856"/>
        <dbReference type="ChEBI" id="CHEBI:59789"/>
        <dbReference type="ChEBI" id="CHEBI:65314"/>
        <dbReference type="ChEBI" id="CHEBI:74486"/>
        <dbReference type="EC" id="2.1.1.177"/>
    </reaction>
</comment>
<comment type="subunit">
    <text evidence="1">Homodimer.</text>
</comment>
<comment type="subcellular location">
    <subcellularLocation>
        <location evidence="1">Cytoplasm</location>
    </subcellularLocation>
</comment>
<comment type="similarity">
    <text evidence="1">Belongs to the RNA methyltransferase RlmH family.</text>
</comment>
<accession>Q11RC7</accession>
<reference key="1">
    <citation type="journal article" date="2007" name="Appl. Environ. Microbiol.">
        <title>Genome sequence of the cellulolytic gliding bacterium Cytophaga hutchinsonii.</title>
        <authorList>
            <person name="Xie G."/>
            <person name="Bruce D.C."/>
            <person name="Challacombe J.F."/>
            <person name="Chertkov O."/>
            <person name="Detter J.C."/>
            <person name="Gilna P."/>
            <person name="Han C.S."/>
            <person name="Lucas S."/>
            <person name="Misra M."/>
            <person name="Myers G.L."/>
            <person name="Richardson P."/>
            <person name="Tapia R."/>
            <person name="Thayer N."/>
            <person name="Thompson L.S."/>
            <person name="Brettin T.S."/>
            <person name="Henrissat B."/>
            <person name="Wilson D.B."/>
            <person name="McBride M.J."/>
        </authorList>
    </citation>
    <scope>NUCLEOTIDE SEQUENCE [LARGE SCALE GENOMIC DNA]</scope>
    <source>
        <strain>ATCC 33406 / DSM 1761 / JCM 20678 / CIP 103989 / IAM 12607 / NBRC 15051 / NCIMB 9469 / D465</strain>
    </source>
</reference>
<gene>
    <name evidence="1" type="primary">rlmH</name>
    <name type="ordered locus">CHU_2788</name>
</gene>
<organism>
    <name type="scientific">Cytophaga hutchinsonii (strain ATCC 33406 / DSM 1761 / CIP 103989 / NBRC 15051 / NCIMB 9469 / D465)</name>
    <dbReference type="NCBI Taxonomy" id="269798"/>
    <lineage>
        <taxon>Bacteria</taxon>
        <taxon>Pseudomonadati</taxon>
        <taxon>Bacteroidota</taxon>
        <taxon>Cytophagia</taxon>
        <taxon>Cytophagales</taxon>
        <taxon>Cytophagaceae</taxon>
        <taxon>Cytophaga</taxon>
    </lineage>
</organism>
<keyword id="KW-0963">Cytoplasm</keyword>
<keyword id="KW-0489">Methyltransferase</keyword>
<keyword id="KW-1185">Reference proteome</keyword>
<keyword id="KW-0698">rRNA processing</keyword>
<keyword id="KW-0949">S-adenosyl-L-methionine</keyword>
<keyword id="KW-0808">Transferase</keyword>